<evidence type="ECO:0000255" key="1">
    <source>
        <dbReference type="HAMAP-Rule" id="MF_00513"/>
    </source>
</evidence>
<evidence type="ECO:0000305" key="2"/>
<feature type="chain" id="PRO_1000081592" description="HTH-type transcriptional regulator ArgP">
    <location>
        <begin position="1"/>
        <end position="297"/>
    </location>
</feature>
<feature type="domain" description="HTH lysR-type" evidence="1">
    <location>
        <begin position="4"/>
        <end position="60"/>
    </location>
</feature>
<feature type="DNA-binding region" description="H-T-H motif" evidence="1">
    <location>
        <begin position="21"/>
        <end position="40"/>
    </location>
</feature>
<protein>
    <recommendedName>
        <fullName evidence="1">HTH-type transcriptional regulator ArgP</fullName>
    </recommendedName>
</protein>
<comment type="function">
    <text evidence="1">Controls the transcription of genes involved in arginine and lysine metabolism.</text>
</comment>
<comment type="subunit">
    <text evidence="1">Homodimer.</text>
</comment>
<comment type="similarity">
    <text evidence="2">Belongs to the LysR transcriptional regulatory family.</text>
</comment>
<accession>A9N3P8</accession>
<keyword id="KW-0238">DNA-binding</keyword>
<keyword id="KW-0804">Transcription</keyword>
<keyword id="KW-0805">Transcription regulation</keyword>
<dbReference type="EMBL" id="CP000886">
    <property type="protein sequence ID" value="ABX69151.1"/>
    <property type="molecule type" value="Genomic_DNA"/>
</dbReference>
<dbReference type="RefSeq" id="WP_000828345.1">
    <property type="nucleotide sequence ID" value="NC_010102.1"/>
</dbReference>
<dbReference type="SMR" id="A9N3P8"/>
<dbReference type="GeneID" id="66757362"/>
<dbReference type="KEGG" id="spq:SPAB_03820"/>
<dbReference type="PATRIC" id="fig|1016998.12.peg.3599"/>
<dbReference type="HOGENOM" id="CLU_063829_0_0_6"/>
<dbReference type="BioCyc" id="SENT1016998:SPAB_RS15530-MONOMER"/>
<dbReference type="Proteomes" id="UP000008556">
    <property type="component" value="Chromosome"/>
</dbReference>
<dbReference type="GO" id="GO:0003677">
    <property type="term" value="F:DNA binding"/>
    <property type="evidence" value="ECO:0007669"/>
    <property type="project" value="UniProtKB-UniRule"/>
</dbReference>
<dbReference type="GO" id="GO:0003700">
    <property type="term" value="F:DNA-binding transcription factor activity"/>
    <property type="evidence" value="ECO:0007669"/>
    <property type="project" value="UniProtKB-UniRule"/>
</dbReference>
<dbReference type="CDD" id="cd08428">
    <property type="entry name" value="PBP2_IciA_ArgP"/>
    <property type="match status" value="1"/>
</dbReference>
<dbReference type="FunFam" id="1.10.10.10:FF:000061">
    <property type="entry name" value="HTH-type transcriptional regulator ArgP"/>
    <property type="match status" value="1"/>
</dbReference>
<dbReference type="FunFam" id="3.40.190.290:FF:000002">
    <property type="entry name" value="HTH-type transcriptional regulator ArgP"/>
    <property type="match status" value="1"/>
</dbReference>
<dbReference type="Gene3D" id="3.40.190.290">
    <property type="match status" value="1"/>
</dbReference>
<dbReference type="Gene3D" id="1.10.10.10">
    <property type="entry name" value="Winged helix-like DNA-binding domain superfamily/Winged helix DNA-binding domain"/>
    <property type="match status" value="1"/>
</dbReference>
<dbReference type="HAMAP" id="MF_00513">
    <property type="entry name" value="HTH_type_ArgP"/>
    <property type="match status" value="1"/>
</dbReference>
<dbReference type="InterPro" id="IPR017685">
    <property type="entry name" value="ArgP"/>
</dbReference>
<dbReference type="InterPro" id="IPR023490">
    <property type="entry name" value="ArgP_gammaproteobact"/>
</dbReference>
<dbReference type="InterPro" id="IPR050176">
    <property type="entry name" value="LTTR"/>
</dbReference>
<dbReference type="InterPro" id="IPR005119">
    <property type="entry name" value="LysR_subst-bd"/>
</dbReference>
<dbReference type="InterPro" id="IPR000847">
    <property type="entry name" value="Tscrpt_reg_HTH_LysR"/>
</dbReference>
<dbReference type="InterPro" id="IPR036388">
    <property type="entry name" value="WH-like_DNA-bd_sf"/>
</dbReference>
<dbReference type="InterPro" id="IPR036390">
    <property type="entry name" value="WH_DNA-bd_sf"/>
</dbReference>
<dbReference type="NCBIfam" id="TIGR03298">
    <property type="entry name" value="argP"/>
    <property type="match status" value="1"/>
</dbReference>
<dbReference type="NCBIfam" id="NF002964">
    <property type="entry name" value="PRK03635.1"/>
    <property type="match status" value="1"/>
</dbReference>
<dbReference type="NCBIfam" id="NF009888">
    <property type="entry name" value="PRK13348.1"/>
    <property type="match status" value="1"/>
</dbReference>
<dbReference type="PANTHER" id="PTHR30579:SF2">
    <property type="entry name" value="HTH-TYPE TRANSCRIPTIONAL REGULATOR ARGP"/>
    <property type="match status" value="1"/>
</dbReference>
<dbReference type="PANTHER" id="PTHR30579">
    <property type="entry name" value="TRANSCRIPTIONAL REGULATOR"/>
    <property type="match status" value="1"/>
</dbReference>
<dbReference type="Pfam" id="PF00126">
    <property type="entry name" value="HTH_1"/>
    <property type="match status" value="1"/>
</dbReference>
<dbReference type="Pfam" id="PF03466">
    <property type="entry name" value="LysR_substrate"/>
    <property type="match status" value="1"/>
</dbReference>
<dbReference type="PRINTS" id="PR00039">
    <property type="entry name" value="HTHLYSR"/>
</dbReference>
<dbReference type="SUPFAM" id="SSF53850">
    <property type="entry name" value="Periplasmic binding protein-like II"/>
    <property type="match status" value="1"/>
</dbReference>
<dbReference type="SUPFAM" id="SSF46785">
    <property type="entry name" value="Winged helix' DNA-binding domain"/>
    <property type="match status" value="1"/>
</dbReference>
<dbReference type="PROSITE" id="PS50931">
    <property type="entry name" value="HTH_LYSR"/>
    <property type="match status" value="1"/>
</dbReference>
<name>ARGP_SALPB</name>
<gene>
    <name evidence="1" type="primary">argP</name>
    <name type="synonym">iciA</name>
    <name type="ordered locus">SPAB_03820</name>
</gene>
<sequence>MKRPDYRTLQALDAVIRERGFERAAQKLCITQSAVSQRIKQLENMFGQPLLVRTVPPRPTEQGQKLLALLRQVELLEEEWLGDEQTGSTPLLLSLAVNADSLATWLLPALAPVLADSPIRLNLQVEDETRTQERLRRGEVVGAVSIQHQALPSCLVDKLGALDYLFVASKPFAERYFPNGVTRSSLLKAPAVAFDHLDDMHQAFLQQNFDLPPGSVPCHIVNSSEAFVQLARQGTTCCMIPHLQIEKELESGELINLTPGLLQRRMLYWHRFAPESRMMRKVTDALLEYGHKVLRQD</sequence>
<organism>
    <name type="scientific">Salmonella paratyphi B (strain ATCC BAA-1250 / SPB7)</name>
    <dbReference type="NCBI Taxonomy" id="1016998"/>
    <lineage>
        <taxon>Bacteria</taxon>
        <taxon>Pseudomonadati</taxon>
        <taxon>Pseudomonadota</taxon>
        <taxon>Gammaproteobacteria</taxon>
        <taxon>Enterobacterales</taxon>
        <taxon>Enterobacteriaceae</taxon>
        <taxon>Salmonella</taxon>
    </lineage>
</organism>
<proteinExistence type="inferred from homology"/>
<reference key="1">
    <citation type="submission" date="2007-11" db="EMBL/GenBank/DDBJ databases">
        <authorList>
            <consortium name="The Salmonella enterica serovar Paratyphi B Genome Sequencing Project"/>
            <person name="McClelland M."/>
            <person name="Sanderson E.K."/>
            <person name="Porwollik S."/>
            <person name="Spieth J."/>
            <person name="Clifton W.S."/>
            <person name="Fulton R."/>
            <person name="Cordes M."/>
            <person name="Wollam A."/>
            <person name="Shah N."/>
            <person name="Pepin K."/>
            <person name="Bhonagiri V."/>
            <person name="Nash W."/>
            <person name="Johnson M."/>
            <person name="Thiruvilangam P."/>
            <person name="Wilson R."/>
        </authorList>
    </citation>
    <scope>NUCLEOTIDE SEQUENCE [LARGE SCALE GENOMIC DNA]</scope>
    <source>
        <strain>ATCC BAA-1250 / SPB7</strain>
    </source>
</reference>